<keyword id="KW-0131">Cell cycle</keyword>
<keyword id="KW-0132">Cell division</keyword>
<keyword id="KW-0159">Chromosome partition</keyword>
<keyword id="KW-0963">Cytoplasm</keyword>
<keyword id="KW-1185">Reference proteome</keyword>
<evidence type="ECO:0000255" key="1">
    <source>
        <dbReference type="HAMAP-Rule" id="MF_01805"/>
    </source>
</evidence>
<gene>
    <name evidence="1" type="primary">scpA</name>
    <name type="ordered locus">LSL_0940</name>
</gene>
<dbReference type="EMBL" id="CP000233">
    <property type="protein sequence ID" value="ABD99750.1"/>
    <property type="molecule type" value="Genomic_DNA"/>
</dbReference>
<dbReference type="RefSeq" id="WP_011476059.1">
    <property type="nucleotide sequence ID" value="NC_007929.1"/>
</dbReference>
<dbReference type="RefSeq" id="YP_535833.1">
    <property type="nucleotide sequence ID" value="NC_007929.1"/>
</dbReference>
<dbReference type="SMR" id="Q1WTK0"/>
<dbReference type="STRING" id="362948.LSL_0940"/>
<dbReference type="KEGG" id="lsl:LSL_0940"/>
<dbReference type="PATRIC" id="fig|362948.14.peg.1015"/>
<dbReference type="HOGENOM" id="CLU_038686_3_1_9"/>
<dbReference type="OrthoDB" id="9811016at2"/>
<dbReference type="Proteomes" id="UP000006559">
    <property type="component" value="Chromosome"/>
</dbReference>
<dbReference type="GO" id="GO:0005737">
    <property type="term" value="C:cytoplasm"/>
    <property type="evidence" value="ECO:0007669"/>
    <property type="project" value="UniProtKB-SubCell"/>
</dbReference>
<dbReference type="GO" id="GO:0051301">
    <property type="term" value="P:cell division"/>
    <property type="evidence" value="ECO:0007669"/>
    <property type="project" value="UniProtKB-KW"/>
</dbReference>
<dbReference type="GO" id="GO:0007059">
    <property type="term" value="P:chromosome segregation"/>
    <property type="evidence" value="ECO:0007669"/>
    <property type="project" value="UniProtKB-UniRule"/>
</dbReference>
<dbReference type="GO" id="GO:0006260">
    <property type="term" value="P:DNA replication"/>
    <property type="evidence" value="ECO:0007669"/>
    <property type="project" value="UniProtKB-UniRule"/>
</dbReference>
<dbReference type="Gene3D" id="6.10.250.2410">
    <property type="match status" value="1"/>
</dbReference>
<dbReference type="HAMAP" id="MF_01805">
    <property type="entry name" value="ScpA"/>
    <property type="match status" value="1"/>
</dbReference>
<dbReference type="InterPro" id="IPR003768">
    <property type="entry name" value="ScpA"/>
</dbReference>
<dbReference type="PANTHER" id="PTHR33969">
    <property type="entry name" value="SEGREGATION AND CONDENSATION PROTEIN A"/>
    <property type="match status" value="1"/>
</dbReference>
<dbReference type="PANTHER" id="PTHR33969:SF2">
    <property type="entry name" value="SEGREGATION AND CONDENSATION PROTEIN A"/>
    <property type="match status" value="1"/>
</dbReference>
<dbReference type="Pfam" id="PF02616">
    <property type="entry name" value="SMC_ScpA"/>
    <property type="match status" value="1"/>
</dbReference>
<name>SCPA_LIGS1</name>
<reference key="1">
    <citation type="journal article" date="2006" name="Proc. Natl. Acad. Sci. U.S.A.">
        <title>Multireplicon genome architecture of Lactobacillus salivarius.</title>
        <authorList>
            <person name="Claesson M.J."/>
            <person name="Li Y."/>
            <person name="Leahy S."/>
            <person name="Canchaya C."/>
            <person name="van Pijkeren J.P."/>
            <person name="Cerdeno-Tarraga A.M."/>
            <person name="Parkhill J."/>
            <person name="Flynn S."/>
            <person name="O'Sullivan G.C."/>
            <person name="Collins J.K."/>
            <person name="Higgins D."/>
            <person name="Shanahan F."/>
            <person name="Fitzgerald G.F."/>
            <person name="van Sinderen D."/>
            <person name="O'Toole P.W."/>
        </authorList>
    </citation>
    <scope>NUCLEOTIDE SEQUENCE [LARGE SCALE GENOMIC DNA]</scope>
    <source>
        <strain>UCC118</strain>
    </source>
</reference>
<sequence>MAQENKQNSRTAEHLTFKLDQFEGPLDLLLHLIKQNEMDIYDIQVAEITSQYIDYLHQMQDLRLDIAGEYLVIAATLLNIKSKMLLPVEQEQQVEEDYVDPREDLVQQLVSHQLYQEVAAKFHVMEKQRMELFSREQAVNEDVTYEVSEGTTIDLLQKAFAKLMARKKVKKIKKIKRKIIPERYTIKEEIENIEHTLKMHKGTMNFTDLFDFDGEVEVEKVVTSFLALLELVRVGRVSASQEENNGPILMTYEGKAEEDAI</sequence>
<proteinExistence type="inferred from homology"/>
<accession>Q1WTK0</accession>
<protein>
    <recommendedName>
        <fullName evidence="1">Segregation and condensation protein A</fullName>
    </recommendedName>
</protein>
<feature type="chain" id="PRO_1000069974" description="Segregation and condensation protein A">
    <location>
        <begin position="1"/>
        <end position="261"/>
    </location>
</feature>
<organism>
    <name type="scientific">Ligilactobacillus salivarius (strain UCC118)</name>
    <name type="common">Lactobacillus salivarius</name>
    <dbReference type="NCBI Taxonomy" id="362948"/>
    <lineage>
        <taxon>Bacteria</taxon>
        <taxon>Bacillati</taxon>
        <taxon>Bacillota</taxon>
        <taxon>Bacilli</taxon>
        <taxon>Lactobacillales</taxon>
        <taxon>Lactobacillaceae</taxon>
        <taxon>Ligilactobacillus</taxon>
    </lineage>
</organism>
<comment type="function">
    <text evidence="1">Participates in chromosomal partition during cell division. May act via the formation of a condensin-like complex containing Smc and ScpB that pull DNA away from mid-cell into both cell halves.</text>
</comment>
<comment type="subunit">
    <text evidence="1">Component of a cohesin-like complex composed of ScpA, ScpB and the Smc homodimer, in which ScpA and ScpB bind to the head domain of Smc. The presence of the three proteins is required for the association of the complex with DNA.</text>
</comment>
<comment type="subcellular location">
    <subcellularLocation>
        <location evidence="1">Cytoplasm</location>
    </subcellularLocation>
    <text evidence="1">Associated with two foci at the outer edges of the nucleoid region in young cells, and at four foci within both cell halves in older cells.</text>
</comment>
<comment type="similarity">
    <text evidence="1">Belongs to the ScpA family.</text>
</comment>